<feature type="chain" id="PRO_1000123927" description="Probable protein kinase UbiB">
    <location>
        <begin position="1"/>
        <end position="549"/>
    </location>
</feature>
<feature type="transmembrane region" description="Helical" evidence="1">
    <location>
        <begin position="498"/>
        <end position="518"/>
    </location>
</feature>
<feature type="transmembrane region" description="Helical" evidence="1">
    <location>
        <begin position="520"/>
        <end position="540"/>
    </location>
</feature>
<feature type="domain" description="Protein kinase" evidence="1">
    <location>
        <begin position="123"/>
        <end position="501"/>
    </location>
</feature>
<feature type="active site" description="Proton acceptor" evidence="1">
    <location>
        <position position="287"/>
    </location>
</feature>
<feature type="binding site" evidence="1">
    <location>
        <begin position="129"/>
        <end position="137"/>
    </location>
    <ligand>
        <name>ATP</name>
        <dbReference type="ChEBI" id="CHEBI:30616"/>
    </ligand>
</feature>
<feature type="binding site" evidence="1">
    <location>
        <position position="152"/>
    </location>
    <ligand>
        <name>ATP</name>
        <dbReference type="ChEBI" id="CHEBI:30616"/>
    </ligand>
</feature>
<name>UBIB_SHEPW</name>
<reference key="1">
    <citation type="journal article" date="2008" name="PLoS ONE">
        <title>Environmental adaptation: genomic analysis of the piezotolerant and psychrotolerant deep-sea iron reducing bacterium Shewanella piezotolerans WP3.</title>
        <authorList>
            <person name="Wang F."/>
            <person name="Wang J."/>
            <person name="Jian H."/>
            <person name="Zhang B."/>
            <person name="Li S."/>
            <person name="Wang F."/>
            <person name="Zeng X."/>
            <person name="Gao L."/>
            <person name="Bartlett D.H."/>
            <person name="Yu J."/>
            <person name="Hu S."/>
            <person name="Xiao X."/>
        </authorList>
    </citation>
    <scope>NUCLEOTIDE SEQUENCE [LARGE SCALE GENOMIC DNA]</scope>
    <source>
        <strain>WP3 / JCM 13877</strain>
    </source>
</reference>
<keyword id="KW-0067">ATP-binding</keyword>
<keyword id="KW-0997">Cell inner membrane</keyword>
<keyword id="KW-1003">Cell membrane</keyword>
<keyword id="KW-0418">Kinase</keyword>
<keyword id="KW-0472">Membrane</keyword>
<keyword id="KW-0547">Nucleotide-binding</keyword>
<keyword id="KW-0808">Transferase</keyword>
<keyword id="KW-0812">Transmembrane</keyword>
<keyword id="KW-1133">Transmembrane helix</keyword>
<keyword id="KW-0831">Ubiquinone biosynthesis</keyword>
<evidence type="ECO:0000255" key="1">
    <source>
        <dbReference type="HAMAP-Rule" id="MF_00414"/>
    </source>
</evidence>
<organism>
    <name type="scientific">Shewanella piezotolerans (strain WP3 / JCM 13877)</name>
    <dbReference type="NCBI Taxonomy" id="225849"/>
    <lineage>
        <taxon>Bacteria</taxon>
        <taxon>Pseudomonadati</taxon>
        <taxon>Pseudomonadota</taxon>
        <taxon>Gammaproteobacteria</taxon>
        <taxon>Alteromonadales</taxon>
        <taxon>Shewanellaceae</taxon>
        <taxon>Shewanella</taxon>
    </lineage>
</organism>
<comment type="function">
    <text evidence="1">Is probably a protein kinase regulator of UbiI activity which is involved in aerobic coenzyme Q (ubiquinone) biosynthesis.</text>
</comment>
<comment type="pathway">
    <text>Cofactor biosynthesis; ubiquinone biosynthesis [regulation].</text>
</comment>
<comment type="subcellular location">
    <subcellularLocation>
        <location evidence="1">Cell inner membrane</location>
        <topology evidence="1">Multi-pass membrane protein</topology>
    </subcellularLocation>
</comment>
<comment type="similarity">
    <text evidence="1">Belongs to the ABC1 family. UbiB subfamily.</text>
</comment>
<sequence length="549" mass="63088">MTVKSIKRAYQVIRTTLHYGLDDLIPSKVTPWYFKLLRGSLFWLRNKHKDKVGGERLKLAMQELGPVYIKFGQMLSTRRDLLSDEWAEELAMLQDRVPPFDSAIARESIEQELNAPIETYFDDFEDTPLASASISQVHTATLKSNGAKVVLKVLRPDVEQKVHADIQLMSQAANFLESLLGANNRLRPAEVVEDYRTTIEGELNLKLEALNAIKLRNNFLDSNALYIPYMYEELCFTRLIVMERIDGVPVSDKAALEAQGTNLKLLAERGVELFFTQVFRDNFFHADMHPGNIFVSREHPNDPFYIGLDCGIMGTLTDEDKRYLAENFLAFFNRDYRRIAQLYIESGWVSADTDISAFEQAVKVVCEPMFNKPLDEISFGHVLLELFRTARRFDMVVQPQLVLLEKTLLYIEGLGRQLYPQLDLWQTAKPFLEDWMAEQVGPKAMAGKIKQQLPYWADQLPELPELIYDNLKMGRNLAKTHNKLLDRYLKHQQKAHKSNYLLITSAILVICGTILLNQDATLWASYGSIGTGLILWVLGWRSRPKNRKF</sequence>
<accession>B8CI04</accession>
<gene>
    <name evidence="1" type="primary">ubiB</name>
    <name type="ordered locus">swp_0449</name>
</gene>
<dbReference type="EC" id="2.7.-.-" evidence="1"/>
<dbReference type="EMBL" id="CP000472">
    <property type="protein sequence ID" value="ACJ27280.1"/>
    <property type="molecule type" value="Genomic_DNA"/>
</dbReference>
<dbReference type="RefSeq" id="WP_020910661.1">
    <property type="nucleotide sequence ID" value="NC_011566.1"/>
</dbReference>
<dbReference type="SMR" id="B8CI04"/>
<dbReference type="STRING" id="225849.swp_0449"/>
<dbReference type="KEGG" id="swp:swp_0449"/>
<dbReference type="eggNOG" id="COG0661">
    <property type="taxonomic scope" value="Bacteria"/>
</dbReference>
<dbReference type="HOGENOM" id="CLU_006533_0_0_6"/>
<dbReference type="OrthoDB" id="9795390at2"/>
<dbReference type="UniPathway" id="UPA00232"/>
<dbReference type="Proteomes" id="UP000000753">
    <property type="component" value="Chromosome"/>
</dbReference>
<dbReference type="GO" id="GO:0005886">
    <property type="term" value="C:plasma membrane"/>
    <property type="evidence" value="ECO:0007669"/>
    <property type="project" value="UniProtKB-SubCell"/>
</dbReference>
<dbReference type="GO" id="GO:0005524">
    <property type="term" value="F:ATP binding"/>
    <property type="evidence" value="ECO:0007669"/>
    <property type="project" value="UniProtKB-KW"/>
</dbReference>
<dbReference type="GO" id="GO:0004672">
    <property type="term" value="F:protein kinase activity"/>
    <property type="evidence" value="ECO:0007669"/>
    <property type="project" value="UniProtKB-UniRule"/>
</dbReference>
<dbReference type="GO" id="GO:0010795">
    <property type="term" value="P:regulation of ubiquinone biosynthetic process"/>
    <property type="evidence" value="ECO:0007669"/>
    <property type="project" value="UniProtKB-UniRule"/>
</dbReference>
<dbReference type="GO" id="GO:0006744">
    <property type="term" value="P:ubiquinone biosynthetic process"/>
    <property type="evidence" value="ECO:0007669"/>
    <property type="project" value="UniProtKB-UniPathway"/>
</dbReference>
<dbReference type="CDD" id="cd13972">
    <property type="entry name" value="UbiB"/>
    <property type="match status" value="1"/>
</dbReference>
<dbReference type="HAMAP" id="MF_00414">
    <property type="entry name" value="UbiB"/>
    <property type="match status" value="1"/>
</dbReference>
<dbReference type="InterPro" id="IPR004147">
    <property type="entry name" value="ABC1_dom"/>
</dbReference>
<dbReference type="InterPro" id="IPR011009">
    <property type="entry name" value="Kinase-like_dom_sf"/>
</dbReference>
<dbReference type="InterPro" id="IPR010232">
    <property type="entry name" value="UbiB"/>
</dbReference>
<dbReference type="InterPro" id="IPR045308">
    <property type="entry name" value="UbiB_bact"/>
</dbReference>
<dbReference type="InterPro" id="IPR050154">
    <property type="entry name" value="UbiB_kinase"/>
</dbReference>
<dbReference type="NCBIfam" id="NF003404">
    <property type="entry name" value="PRK04750.1"/>
    <property type="match status" value="1"/>
</dbReference>
<dbReference type="NCBIfam" id="TIGR01982">
    <property type="entry name" value="UbiB"/>
    <property type="match status" value="1"/>
</dbReference>
<dbReference type="PANTHER" id="PTHR10566">
    <property type="entry name" value="CHAPERONE-ACTIVITY OF BC1 COMPLEX CABC1 -RELATED"/>
    <property type="match status" value="1"/>
</dbReference>
<dbReference type="PANTHER" id="PTHR10566:SF113">
    <property type="entry name" value="PROTEIN ACTIVITY OF BC1 COMPLEX KINASE 7, CHLOROPLASTIC"/>
    <property type="match status" value="1"/>
</dbReference>
<dbReference type="Pfam" id="PF03109">
    <property type="entry name" value="ABC1"/>
    <property type="match status" value="1"/>
</dbReference>
<dbReference type="SUPFAM" id="SSF56112">
    <property type="entry name" value="Protein kinase-like (PK-like)"/>
    <property type="match status" value="1"/>
</dbReference>
<protein>
    <recommendedName>
        <fullName evidence="1">Probable protein kinase UbiB</fullName>
        <ecNumber evidence="1">2.7.-.-</ecNumber>
    </recommendedName>
    <alternativeName>
        <fullName evidence="1">Ubiquinone biosynthesis protein UbiB</fullName>
    </alternativeName>
</protein>
<proteinExistence type="inferred from homology"/>